<proteinExistence type="inferred from homology"/>
<organism>
    <name type="scientific">Listeria monocytogenes serotype 4a (strain HCC23)</name>
    <dbReference type="NCBI Taxonomy" id="552536"/>
    <lineage>
        <taxon>Bacteria</taxon>
        <taxon>Bacillati</taxon>
        <taxon>Bacillota</taxon>
        <taxon>Bacilli</taxon>
        <taxon>Bacillales</taxon>
        <taxon>Listeriaceae</taxon>
        <taxon>Listeria</taxon>
    </lineage>
</organism>
<dbReference type="EC" id="5.3.1.16" evidence="1"/>
<dbReference type="EMBL" id="CP001175">
    <property type="protein sequence ID" value="ACK40406.1"/>
    <property type="molecule type" value="Genomic_DNA"/>
</dbReference>
<dbReference type="RefSeq" id="WP_012581849.1">
    <property type="nucleotide sequence ID" value="NC_011660.1"/>
</dbReference>
<dbReference type="SMR" id="B8DA61"/>
<dbReference type="KEGG" id="lmh:LMHCC_2067"/>
<dbReference type="HOGENOM" id="CLU_048577_1_1_9"/>
<dbReference type="UniPathway" id="UPA00031">
    <property type="reaction ID" value="UER00009"/>
</dbReference>
<dbReference type="GO" id="GO:0005737">
    <property type="term" value="C:cytoplasm"/>
    <property type="evidence" value="ECO:0007669"/>
    <property type="project" value="UniProtKB-SubCell"/>
</dbReference>
<dbReference type="GO" id="GO:0003949">
    <property type="term" value="F:1-(5-phosphoribosyl)-5-[(5-phosphoribosylamino)methylideneamino]imidazole-4-carboxamide isomerase activity"/>
    <property type="evidence" value="ECO:0007669"/>
    <property type="project" value="UniProtKB-UniRule"/>
</dbReference>
<dbReference type="GO" id="GO:0000105">
    <property type="term" value="P:L-histidine biosynthetic process"/>
    <property type="evidence" value="ECO:0007669"/>
    <property type="project" value="UniProtKB-UniRule"/>
</dbReference>
<dbReference type="GO" id="GO:0000162">
    <property type="term" value="P:L-tryptophan biosynthetic process"/>
    <property type="evidence" value="ECO:0007669"/>
    <property type="project" value="TreeGrafter"/>
</dbReference>
<dbReference type="CDD" id="cd04732">
    <property type="entry name" value="HisA"/>
    <property type="match status" value="1"/>
</dbReference>
<dbReference type="FunFam" id="3.20.20.70:FF:000009">
    <property type="entry name" value="1-(5-phosphoribosyl)-5-[(5-phosphoribosylamino)methylideneamino] imidazole-4-carboxamide isomerase"/>
    <property type="match status" value="1"/>
</dbReference>
<dbReference type="Gene3D" id="3.20.20.70">
    <property type="entry name" value="Aldolase class I"/>
    <property type="match status" value="1"/>
</dbReference>
<dbReference type="HAMAP" id="MF_01014">
    <property type="entry name" value="HisA"/>
    <property type="match status" value="1"/>
</dbReference>
<dbReference type="InterPro" id="IPR013785">
    <property type="entry name" value="Aldolase_TIM"/>
</dbReference>
<dbReference type="InterPro" id="IPR006062">
    <property type="entry name" value="His_biosynth"/>
</dbReference>
<dbReference type="InterPro" id="IPR006063">
    <property type="entry name" value="HisA_bact_arch"/>
</dbReference>
<dbReference type="InterPro" id="IPR044524">
    <property type="entry name" value="Isoase_HisA-like"/>
</dbReference>
<dbReference type="InterPro" id="IPR023016">
    <property type="entry name" value="Isoase_HisA-like_bact"/>
</dbReference>
<dbReference type="InterPro" id="IPR011060">
    <property type="entry name" value="RibuloseP-bd_barrel"/>
</dbReference>
<dbReference type="NCBIfam" id="TIGR00007">
    <property type="entry name" value="1-(5-phosphoribosyl)-5-[(5-phosphoribosylamino)methylideneamino]imidazole-4-carboxamide isomerase"/>
    <property type="match status" value="1"/>
</dbReference>
<dbReference type="PANTHER" id="PTHR43090">
    <property type="entry name" value="1-(5-PHOSPHORIBOSYL)-5-[(5-PHOSPHORIBOSYLAMINO)METHYLIDENEAMINO] IMIDAZOLE-4-CARBOXAMIDE ISOMERASE"/>
    <property type="match status" value="1"/>
</dbReference>
<dbReference type="PANTHER" id="PTHR43090:SF2">
    <property type="entry name" value="1-(5-PHOSPHORIBOSYL)-5-[(5-PHOSPHORIBOSYLAMINO)METHYLIDENEAMINO] IMIDAZOLE-4-CARBOXAMIDE ISOMERASE"/>
    <property type="match status" value="1"/>
</dbReference>
<dbReference type="Pfam" id="PF00977">
    <property type="entry name" value="His_biosynth"/>
    <property type="match status" value="1"/>
</dbReference>
<dbReference type="SUPFAM" id="SSF51366">
    <property type="entry name" value="Ribulose-phoshate binding barrel"/>
    <property type="match status" value="1"/>
</dbReference>
<comment type="catalytic activity">
    <reaction evidence="1">
        <text>1-(5-phospho-beta-D-ribosyl)-5-[(5-phospho-beta-D-ribosylamino)methylideneamino]imidazole-4-carboxamide = 5-[(5-phospho-1-deoxy-D-ribulos-1-ylimino)methylamino]-1-(5-phospho-beta-D-ribosyl)imidazole-4-carboxamide</text>
        <dbReference type="Rhea" id="RHEA:15469"/>
        <dbReference type="ChEBI" id="CHEBI:58435"/>
        <dbReference type="ChEBI" id="CHEBI:58525"/>
        <dbReference type="EC" id="5.3.1.16"/>
    </reaction>
</comment>
<comment type="pathway">
    <text evidence="1">Amino-acid biosynthesis; L-histidine biosynthesis; L-histidine from 5-phospho-alpha-D-ribose 1-diphosphate: step 4/9.</text>
</comment>
<comment type="subcellular location">
    <subcellularLocation>
        <location evidence="1">Cytoplasm</location>
    </subcellularLocation>
</comment>
<comment type="similarity">
    <text evidence="1">Belongs to the HisA/HisF family.</text>
</comment>
<reference key="1">
    <citation type="journal article" date="2011" name="J. Bacteriol.">
        <title>Genome sequence of lineage III Listeria monocytogenes strain HCC23.</title>
        <authorList>
            <person name="Steele C.L."/>
            <person name="Donaldson J.R."/>
            <person name="Paul D."/>
            <person name="Banes M.M."/>
            <person name="Arick T."/>
            <person name="Bridges S.M."/>
            <person name="Lawrence M.L."/>
        </authorList>
    </citation>
    <scope>NUCLEOTIDE SEQUENCE [LARGE SCALE GENOMIC DNA]</scope>
    <source>
        <strain>HCC23</strain>
    </source>
</reference>
<name>HIS4_LISMH</name>
<feature type="chain" id="PRO_1000148975" description="1-(5-phosphoribosyl)-5-[(5-phosphoribosylamino)methylideneamino] imidazole-4-carboxamide isomerase">
    <location>
        <begin position="1"/>
        <end position="240"/>
    </location>
</feature>
<feature type="active site" description="Proton acceptor" evidence="1">
    <location>
        <position position="8"/>
    </location>
</feature>
<feature type="active site" description="Proton donor" evidence="1">
    <location>
        <position position="129"/>
    </location>
</feature>
<evidence type="ECO:0000255" key="1">
    <source>
        <dbReference type="HAMAP-Rule" id="MF_01014"/>
    </source>
</evidence>
<protein>
    <recommendedName>
        <fullName evidence="1">1-(5-phosphoribosyl)-5-[(5-phosphoribosylamino)methylideneamino] imidazole-4-carboxamide isomerase</fullName>
        <ecNumber evidence="1">5.3.1.16</ecNumber>
    </recommendedName>
    <alternativeName>
        <fullName evidence="1">Phosphoribosylformimino-5-aminoimidazole carboxamide ribotide isomerase</fullName>
    </alternativeName>
</protein>
<gene>
    <name evidence="1" type="primary">hisA</name>
    <name type="ordered locus">LMHCC_2067</name>
</gene>
<keyword id="KW-0028">Amino-acid biosynthesis</keyword>
<keyword id="KW-0963">Cytoplasm</keyword>
<keyword id="KW-0368">Histidine biosynthesis</keyword>
<keyword id="KW-0413">Isomerase</keyword>
<accession>B8DA61</accession>
<sequence length="240" mass="25860">MQIFPAIDLKNGQCVRLFQGDFSKKTVVNEDPIAQAKGFATDGATYLHIVDLDGALEGRPINLEVIQKMKTTAKIPVQVGGGIRSMAQVDYYLESGIDRVIIGSAALTDPDFLRAAVQKYGAKIAAGIDAKNGLVATRGWLDVSQVNYLDLAKRMEKVGVETIIYTDISRDGTLTGPNLEQMANLKEHVKVNLIASGGVSSRADLEALAKLGLYGAIAGKALYNRQISMSDIVEVEQIAY</sequence>